<dbReference type="EC" id="3.6.1.23" evidence="1"/>
<dbReference type="EMBL" id="AJ749949">
    <property type="protein sequence ID" value="CAG44952.1"/>
    <property type="molecule type" value="Genomic_DNA"/>
</dbReference>
<dbReference type="RefSeq" id="WP_003017689.1">
    <property type="nucleotide sequence ID" value="NZ_CP010290.1"/>
</dbReference>
<dbReference type="RefSeq" id="YP_169368.1">
    <property type="nucleotide sequence ID" value="NC_006570.2"/>
</dbReference>
<dbReference type="SMR" id="Q5NHX4"/>
<dbReference type="STRING" id="177416.FTT_0319"/>
<dbReference type="DNASU" id="3191551"/>
<dbReference type="EnsemblBacteria" id="CAG44952">
    <property type="protein sequence ID" value="CAG44952"/>
    <property type="gene ID" value="FTT_0319"/>
</dbReference>
<dbReference type="KEGG" id="ftu:FTT_0319"/>
<dbReference type="eggNOG" id="COG0756">
    <property type="taxonomic scope" value="Bacteria"/>
</dbReference>
<dbReference type="OrthoDB" id="9809956at2"/>
<dbReference type="UniPathway" id="UPA00610">
    <property type="reaction ID" value="UER00666"/>
</dbReference>
<dbReference type="Proteomes" id="UP000001174">
    <property type="component" value="Chromosome"/>
</dbReference>
<dbReference type="GO" id="GO:0004170">
    <property type="term" value="F:dUTP diphosphatase activity"/>
    <property type="evidence" value="ECO:0007669"/>
    <property type="project" value="UniProtKB-UniRule"/>
</dbReference>
<dbReference type="GO" id="GO:0000287">
    <property type="term" value="F:magnesium ion binding"/>
    <property type="evidence" value="ECO:0007669"/>
    <property type="project" value="UniProtKB-UniRule"/>
</dbReference>
<dbReference type="GO" id="GO:0006226">
    <property type="term" value="P:dUMP biosynthetic process"/>
    <property type="evidence" value="ECO:0007669"/>
    <property type="project" value="UniProtKB-UniRule"/>
</dbReference>
<dbReference type="GO" id="GO:0046081">
    <property type="term" value="P:dUTP catabolic process"/>
    <property type="evidence" value="ECO:0007669"/>
    <property type="project" value="InterPro"/>
</dbReference>
<dbReference type="CDD" id="cd07557">
    <property type="entry name" value="trimeric_dUTPase"/>
    <property type="match status" value="1"/>
</dbReference>
<dbReference type="FunFam" id="2.70.40.10:FF:000002">
    <property type="entry name" value="dUTP diphosphatase"/>
    <property type="match status" value="1"/>
</dbReference>
<dbReference type="Gene3D" id="2.70.40.10">
    <property type="match status" value="1"/>
</dbReference>
<dbReference type="HAMAP" id="MF_00116">
    <property type="entry name" value="dUTPase_bact"/>
    <property type="match status" value="1"/>
</dbReference>
<dbReference type="InterPro" id="IPR008181">
    <property type="entry name" value="dUTPase"/>
</dbReference>
<dbReference type="InterPro" id="IPR029054">
    <property type="entry name" value="dUTPase-like"/>
</dbReference>
<dbReference type="InterPro" id="IPR036157">
    <property type="entry name" value="dUTPase-like_sf"/>
</dbReference>
<dbReference type="InterPro" id="IPR033704">
    <property type="entry name" value="dUTPase_trimeric"/>
</dbReference>
<dbReference type="NCBIfam" id="TIGR00576">
    <property type="entry name" value="dut"/>
    <property type="match status" value="1"/>
</dbReference>
<dbReference type="NCBIfam" id="NF001862">
    <property type="entry name" value="PRK00601.1"/>
    <property type="match status" value="1"/>
</dbReference>
<dbReference type="PANTHER" id="PTHR11241">
    <property type="entry name" value="DEOXYURIDINE 5'-TRIPHOSPHATE NUCLEOTIDOHYDROLASE"/>
    <property type="match status" value="1"/>
</dbReference>
<dbReference type="PANTHER" id="PTHR11241:SF0">
    <property type="entry name" value="DEOXYURIDINE 5'-TRIPHOSPHATE NUCLEOTIDOHYDROLASE"/>
    <property type="match status" value="1"/>
</dbReference>
<dbReference type="Pfam" id="PF00692">
    <property type="entry name" value="dUTPase"/>
    <property type="match status" value="1"/>
</dbReference>
<dbReference type="SUPFAM" id="SSF51283">
    <property type="entry name" value="dUTPase-like"/>
    <property type="match status" value="1"/>
</dbReference>
<sequence length="148" mass="15942">MKVELKILNKELIKELPGYATEGSAAIDLRACISESIYLKSGECKLVATGIAINIANPNYAAMILPRSGLGHKKGLVLGNGTGLIDSDYQGELMVSCFNRSQETIEIEPLMRFAQLVIVPVVQANFEIVEDFSQQSVRATGGFGHTGV</sequence>
<comment type="function">
    <text evidence="1">This enzyme is involved in nucleotide metabolism: it produces dUMP, the immediate precursor of thymidine nucleotides and it decreases the intracellular concentration of dUTP so that uracil cannot be incorporated into DNA.</text>
</comment>
<comment type="catalytic activity">
    <reaction evidence="1">
        <text>dUTP + H2O = dUMP + diphosphate + H(+)</text>
        <dbReference type="Rhea" id="RHEA:10248"/>
        <dbReference type="ChEBI" id="CHEBI:15377"/>
        <dbReference type="ChEBI" id="CHEBI:15378"/>
        <dbReference type="ChEBI" id="CHEBI:33019"/>
        <dbReference type="ChEBI" id="CHEBI:61555"/>
        <dbReference type="ChEBI" id="CHEBI:246422"/>
        <dbReference type="EC" id="3.6.1.23"/>
    </reaction>
</comment>
<comment type="cofactor">
    <cofactor evidence="1">
        <name>Mg(2+)</name>
        <dbReference type="ChEBI" id="CHEBI:18420"/>
    </cofactor>
</comment>
<comment type="pathway">
    <text evidence="1">Pyrimidine metabolism; dUMP biosynthesis; dUMP from dCTP (dUTP route): step 2/2.</text>
</comment>
<comment type="similarity">
    <text evidence="1">Belongs to the dUTPase family.</text>
</comment>
<accession>Q5NHX4</accession>
<organism>
    <name type="scientific">Francisella tularensis subsp. tularensis (strain SCHU S4 / Schu 4)</name>
    <dbReference type="NCBI Taxonomy" id="177416"/>
    <lineage>
        <taxon>Bacteria</taxon>
        <taxon>Pseudomonadati</taxon>
        <taxon>Pseudomonadota</taxon>
        <taxon>Gammaproteobacteria</taxon>
        <taxon>Thiotrichales</taxon>
        <taxon>Francisellaceae</taxon>
        <taxon>Francisella</taxon>
    </lineage>
</organism>
<name>DUT_FRATT</name>
<reference key="1">
    <citation type="journal article" date="2005" name="Nat. Genet.">
        <title>The complete genome sequence of Francisella tularensis, the causative agent of tularemia.</title>
        <authorList>
            <person name="Larsson P."/>
            <person name="Oyston P.C.F."/>
            <person name="Chain P."/>
            <person name="Chu M.C."/>
            <person name="Duffield M."/>
            <person name="Fuxelius H.-H."/>
            <person name="Garcia E."/>
            <person name="Haelltorp G."/>
            <person name="Johansson D."/>
            <person name="Isherwood K.E."/>
            <person name="Karp P.D."/>
            <person name="Larsson E."/>
            <person name="Liu Y."/>
            <person name="Michell S."/>
            <person name="Prior J."/>
            <person name="Prior R."/>
            <person name="Malfatti S."/>
            <person name="Sjoestedt A."/>
            <person name="Svensson K."/>
            <person name="Thompson N."/>
            <person name="Vergez L."/>
            <person name="Wagg J.K."/>
            <person name="Wren B.W."/>
            <person name="Lindler L.E."/>
            <person name="Andersson S.G.E."/>
            <person name="Forsman M."/>
            <person name="Titball R.W."/>
        </authorList>
    </citation>
    <scope>NUCLEOTIDE SEQUENCE [LARGE SCALE GENOMIC DNA]</scope>
    <source>
        <strain>SCHU S4 / Schu 4</strain>
    </source>
</reference>
<evidence type="ECO:0000255" key="1">
    <source>
        <dbReference type="HAMAP-Rule" id="MF_00116"/>
    </source>
</evidence>
<proteinExistence type="inferred from homology"/>
<gene>
    <name evidence="1" type="primary">dut</name>
    <name type="ordered locus">FTT_0319</name>
</gene>
<feature type="chain" id="PRO_0000182862" description="Deoxyuridine 5'-triphosphate nucleotidohydrolase">
    <location>
        <begin position="1"/>
        <end position="148"/>
    </location>
</feature>
<feature type="binding site" evidence="1">
    <location>
        <begin position="67"/>
        <end position="69"/>
    </location>
    <ligand>
        <name>substrate</name>
    </ligand>
</feature>
<feature type="binding site" evidence="1">
    <location>
        <position position="80"/>
    </location>
    <ligand>
        <name>substrate</name>
    </ligand>
</feature>
<feature type="binding site" evidence="1">
    <location>
        <begin position="84"/>
        <end position="86"/>
    </location>
    <ligand>
        <name>substrate</name>
    </ligand>
</feature>
<feature type="binding site" evidence="1">
    <location>
        <position position="94"/>
    </location>
    <ligand>
        <name>substrate</name>
    </ligand>
</feature>
<keyword id="KW-0378">Hydrolase</keyword>
<keyword id="KW-0460">Magnesium</keyword>
<keyword id="KW-0479">Metal-binding</keyword>
<keyword id="KW-0546">Nucleotide metabolism</keyword>
<keyword id="KW-1185">Reference proteome</keyword>
<protein>
    <recommendedName>
        <fullName evidence="1">Deoxyuridine 5'-triphosphate nucleotidohydrolase</fullName>
        <shortName evidence="1">dUTPase</shortName>
        <ecNumber evidence="1">3.6.1.23</ecNumber>
    </recommendedName>
    <alternativeName>
        <fullName evidence="1">dUTP pyrophosphatase</fullName>
    </alternativeName>
</protein>